<sequence>MIPVTSFRGKKVALFGLGGSGLVTARALVAGGAAVVAFDDNPDSVAKAQAEGIATADLHTIDWSSFSSFVLAPGVPLTHPKPHWSVDLAKAAGVEVIGDIELFIRERRVHAPDCPFIAITGTNGKSTTTALIAHILQSSGRDTQLGGNIGTAVLSLDPPKAQRFYVVECSSYQIDLAPTINPTAGILLNLTPDHLDRHGTMQHYADVKERLVAGSGTAIVGVDDSHSTLIADRIERAGVKVERISKRNVVSEGLYAEGSQILRAHGGTSSLLVDLDGIQTLRGSHNAQNAAAAIAACLAVGVSEEEIRAGLKSFPGLKHRMQPVGRRGNVTFVNDSKATNADAAAPALSSFDRIYWIAGGLPKAGGITSLSPLFPRIAKAYLIGEAAAEFAATLGEAVPYEISGTLDKAVQHAAADAEKDATAGNVVMLSPACASFDQYKNFEIRGDSFVAQVAALEGMTMLVHSGKGG</sequence>
<reference key="1">
    <citation type="journal article" date="2001" name="Science">
        <title>The genome of the natural genetic engineer Agrobacterium tumefaciens C58.</title>
        <authorList>
            <person name="Wood D.W."/>
            <person name="Setubal J.C."/>
            <person name="Kaul R."/>
            <person name="Monks D.E."/>
            <person name="Kitajima J.P."/>
            <person name="Okura V.K."/>
            <person name="Zhou Y."/>
            <person name="Chen L."/>
            <person name="Wood G.E."/>
            <person name="Almeida N.F. Jr."/>
            <person name="Woo L."/>
            <person name="Chen Y."/>
            <person name="Paulsen I.T."/>
            <person name="Eisen J.A."/>
            <person name="Karp P.D."/>
            <person name="Bovee D. Sr."/>
            <person name="Chapman P."/>
            <person name="Clendenning J."/>
            <person name="Deatherage G."/>
            <person name="Gillet W."/>
            <person name="Grant C."/>
            <person name="Kutyavin T."/>
            <person name="Levy R."/>
            <person name="Li M.-J."/>
            <person name="McClelland E."/>
            <person name="Palmieri A."/>
            <person name="Raymond C."/>
            <person name="Rouse G."/>
            <person name="Saenphimmachak C."/>
            <person name="Wu Z."/>
            <person name="Romero P."/>
            <person name="Gordon D."/>
            <person name="Zhang S."/>
            <person name="Yoo H."/>
            <person name="Tao Y."/>
            <person name="Biddle P."/>
            <person name="Jung M."/>
            <person name="Krespan W."/>
            <person name="Perry M."/>
            <person name="Gordon-Kamm B."/>
            <person name="Liao L."/>
            <person name="Kim S."/>
            <person name="Hendrick C."/>
            <person name="Zhao Z.-Y."/>
            <person name="Dolan M."/>
            <person name="Chumley F."/>
            <person name="Tingey S.V."/>
            <person name="Tomb J.-F."/>
            <person name="Gordon M.P."/>
            <person name="Olson M.V."/>
            <person name="Nester E.W."/>
        </authorList>
    </citation>
    <scope>NUCLEOTIDE SEQUENCE [LARGE SCALE GENOMIC DNA]</scope>
    <source>
        <strain>C58 / ATCC 33970</strain>
    </source>
</reference>
<reference key="2">
    <citation type="journal article" date="2001" name="Science">
        <title>Genome sequence of the plant pathogen and biotechnology agent Agrobacterium tumefaciens C58.</title>
        <authorList>
            <person name="Goodner B."/>
            <person name="Hinkle G."/>
            <person name="Gattung S."/>
            <person name="Miller N."/>
            <person name="Blanchard M."/>
            <person name="Qurollo B."/>
            <person name="Goldman B.S."/>
            <person name="Cao Y."/>
            <person name="Askenazi M."/>
            <person name="Halling C."/>
            <person name="Mullin L."/>
            <person name="Houmiel K."/>
            <person name="Gordon J."/>
            <person name="Vaudin M."/>
            <person name="Iartchouk O."/>
            <person name="Epp A."/>
            <person name="Liu F."/>
            <person name="Wollam C."/>
            <person name="Allinger M."/>
            <person name="Doughty D."/>
            <person name="Scott C."/>
            <person name="Lappas C."/>
            <person name="Markelz B."/>
            <person name="Flanagan C."/>
            <person name="Crowell C."/>
            <person name="Gurson J."/>
            <person name="Lomo C."/>
            <person name="Sear C."/>
            <person name="Strub G."/>
            <person name="Cielo C."/>
            <person name="Slater S."/>
        </authorList>
    </citation>
    <scope>NUCLEOTIDE SEQUENCE [LARGE SCALE GENOMIC DNA]</scope>
    <source>
        <strain>C58 / ATCC 33970</strain>
    </source>
</reference>
<accession>Q8UDM6</accession>
<name>MURD_AGRFC</name>
<feature type="chain" id="PRO_0000108954" description="UDP-N-acetylmuramoylalanine--D-glutamate ligase">
    <location>
        <begin position="1"/>
        <end position="469"/>
    </location>
</feature>
<feature type="binding site" evidence="1">
    <location>
        <begin position="121"/>
        <end position="127"/>
    </location>
    <ligand>
        <name>ATP</name>
        <dbReference type="ChEBI" id="CHEBI:30616"/>
    </ligand>
</feature>
<gene>
    <name evidence="1" type="primary">murD</name>
    <name type="ordered locus">Atu2096</name>
    <name type="ORF">AGR_C_3803</name>
</gene>
<dbReference type="EC" id="6.3.2.9" evidence="1"/>
<dbReference type="EMBL" id="AE007869">
    <property type="protein sequence ID" value="AAK87846.1"/>
    <property type="molecule type" value="Genomic_DNA"/>
</dbReference>
<dbReference type="PIR" id="AI2833">
    <property type="entry name" value="AI2833"/>
</dbReference>
<dbReference type="PIR" id="E97611">
    <property type="entry name" value="E97611"/>
</dbReference>
<dbReference type="RefSeq" id="NP_355061.1">
    <property type="nucleotide sequence ID" value="NC_003062.2"/>
</dbReference>
<dbReference type="RefSeq" id="WP_010972055.1">
    <property type="nucleotide sequence ID" value="NC_003062.2"/>
</dbReference>
<dbReference type="SMR" id="Q8UDM6"/>
<dbReference type="STRING" id="176299.Atu2096"/>
<dbReference type="EnsemblBacteria" id="AAK87846">
    <property type="protein sequence ID" value="AAK87846"/>
    <property type="gene ID" value="Atu2096"/>
</dbReference>
<dbReference type="GeneID" id="1134134"/>
<dbReference type="KEGG" id="atu:Atu2096"/>
<dbReference type="PATRIC" id="fig|176299.10.peg.2110"/>
<dbReference type="eggNOG" id="COG0771">
    <property type="taxonomic scope" value="Bacteria"/>
</dbReference>
<dbReference type="HOGENOM" id="CLU_032540_3_0_5"/>
<dbReference type="OrthoDB" id="9809796at2"/>
<dbReference type="PhylomeDB" id="Q8UDM6"/>
<dbReference type="BioCyc" id="AGRO:ATU2096-MONOMER"/>
<dbReference type="UniPathway" id="UPA00219"/>
<dbReference type="Proteomes" id="UP000000813">
    <property type="component" value="Chromosome circular"/>
</dbReference>
<dbReference type="GO" id="GO:0005737">
    <property type="term" value="C:cytoplasm"/>
    <property type="evidence" value="ECO:0007669"/>
    <property type="project" value="UniProtKB-SubCell"/>
</dbReference>
<dbReference type="GO" id="GO:0005524">
    <property type="term" value="F:ATP binding"/>
    <property type="evidence" value="ECO:0007669"/>
    <property type="project" value="UniProtKB-UniRule"/>
</dbReference>
<dbReference type="GO" id="GO:0004326">
    <property type="term" value="F:tetrahydrofolylpolyglutamate synthase activity"/>
    <property type="evidence" value="ECO:0007669"/>
    <property type="project" value="InterPro"/>
</dbReference>
<dbReference type="GO" id="GO:0008764">
    <property type="term" value="F:UDP-N-acetylmuramoylalanine-D-glutamate ligase activity"/>
    <property type="evidence" value="ECO:0007669"/>
    <property type="project" value="UniProtKB-UniRule"/>
</dbReference>
<dbReference type="GO" id="GO:0051301">
    <property type="term" value="P:cell division"/>
    <property type="evidence" value="ECO:0007669"/>
    <property type="project" value="UniProtKB-KW"/>
</dbReference>
<dbReference type="GO" id="GO:0071555">
    <property type="term" value="P:cell wall organization"/>
    <property type="evidence" value="ECO:0007669"/>
    <property type="project" value="UniProtKB-KW"/>
</dbReference>
<dbReference type="GO" id="GO:0009252">
    <property type="term" value="P:peptidoglycan biosynthetic process"/>
    <property type="evidence" value="ECO:0007669"/>
    <property type="project" value="UniProtKB-UniRule"/>
</dbReference>
<dbReference type="GO" id="GO:0008360">
    <property type="term" value="P:regulation of cell shape"/>
    <property type="evidence" value="ECO:0007669"/>
    <property type="project" value="UniProtKB-KW"/>
</dbReference>
<dbReference type="Gene3D" id="3.90.190.20">
    <property type="entry name" value="Mur ligase, C-terminal domain"/>
    <property type="match status" value="1"/>
</dbReference>
<dbReference type="Gene3D" id="3.40.1190.10">
    <property type="entry name" value="Mur-like, catalytic domain"/>
    <property type="match status" value="1"/>
</dbReference>
<dbReference type="Gene3D" id="3.40.50.720">
    <property type="entry name" value="NAD(P)-binding Rossmann-like Domain"/>
    <property type="match status" value="1"/>
</dbReference>
<dbReference type="HAMAP" id="MF_00639">
    <property type="entry name" value="MurD"/>
    <property type="match status" value="1"/>
</dbReference>
<dbReference type="InterPro" id="IPR018109">
    <property type="entry name" value="Folylpolyglutamate_synth_CS"/>
</dbReference>
<dbReference type="InterPro" id="IPR036565">
    <property type="entry name" value="Mur-like_cat_sf"/>
</dbReference>
<dbReference type="InterPro" id="IPR004101">
    <property type="entry name" value="Mur_ligase_C"/>
</dbReference>
<dbReference type="InterPro" id="IPR036615">
    <property type="entry name" value="Mur_ligase_C_dom_sf"/>
</dbReference>
<dbReference type="InterPro" id="IPR013221">
    <property type="entry name" value="Mur_ligase_cen"/>
</dbReference>
<dbReference type="InterPro" id="IPR005762">
    <property type="entry name" value="MurD"/>
</dbReference>
<dbReference type="NCBIfam" id="TIGR01087">
    <property type="entry name" value="murD"/>
    <property type="match status" value="1"/>
</dbReference>
<dbReference type="PANTHER" id="PTHR43692">
    <property type="entry name" value="UDP-N-ACETYLMURAMOYLALANINE--D-GLUTAMATE LIGASE"/>
    <property type="match status" value="1"/>
</dbReference>
<dbReference type="PANTHER" id="PTHR43692:SF1">
    <property type="entry name" value="UDP-N-ACETYLMURAMOYLALANINE--D-GLUTAMATE LIGASE"/>
    <property type="match status" value="1"/>
</dbReference>
<dbReference type="Pfam" id="PF02875">
    <property type="entry name" value="Mur_ligase_C"/>
    <property type="match status" value="1"/>
</dbReference>
<dbReference type="Pfam" id="PF08245">
    <property type="entry name" value="Mur_ligase_M"/>
    <property type="match status" value="1"/>
</dbReference>
<dbReference type="SUPFAM" id="SSF51984">
    <property type="entry name" value="MurCD N-terminal domain"/>
    <property type="match status" value="1"/>
</dbReference>
<dbReference type="SUPFAM" id="SSF53623">
    <property type="entry name" value="MurD-like peptide ligases, catalytic domain"/>
    <property type="match status" value="1"/>
</dbReference>
<dbReference type="SUPFAM" id="SSF53244">
    <property type="entry name" value="MurD-like peptide ligases, peptide-binding domain"/>
    <property type="match status" value="1"/>
</dbReference>
<evidence type="ECO:0000255" key="1">
    <source>
        <dbReference type="HAMAP-Rule" id="MF_00639"/>
    </source>
</evidence>
<protein>
    <recommendedName>
        <fullName evidence="1">UDP-N-acetylmuramoylalanine--D-glutamate ligase</fullName>
        <ecNumber evidence="1">6.3.2.9</ecNumber>
    </recommendedName>
    <alternativeName>
        <fullName evidence="1">D-glutamic acid-adding enzyme</fullName>
    </alternativeName>
    <alternativeName>
        <fullName evidence="1">UDP-N-acetylmuramoyl-L-alanyl-D-glutamate synthetase</fullName>
    </alternativeName>
</protein>
<organism>
    <name type="scientific">Agrobacterium fabrum (strain C58 / ATCC 33970)</name>
    <name type="common">Agrobacterium tumefaciens (strain C58)</name>
    <dbReference type="NCBI Taxonomy" id="176299"/>
    <lineage>
        <taxon>Bacteria</taxon>
        <taxon>Pseudomonadati</taxon>
        <taxon>Pseudomonadota</taxon>
        <taxon>Alphaproteobacteria</taxon>
        <taxon>Hyphomicrobiales</taxon>
        <taxon>Rhizobiaceae</taxon>
        <taxon>Rhizobium/Agrobacterium group</taxon>
        <taxon>Agrobacterium</taxon>
        <taxon>Agrobacterium tumefaciens complex</taxon>
    </lineage>
</organism>
<comment type="function">
    <text evidence="1">Cell wall formation. Catalyzes the addition of glutamate to the nucleotide precursor UDP-N-acetylmuramoyl-L-alanine (UMA).</text>
</comment>
<comment type="catalytic activity">
    <reaction evidence="1">
        <text>UDP-N-acetyl-alpha-D-muramoyl-L-alanine + D-glutamate + ATP = UDP-N-acetyl-alpha-D-muramoyl-L-alanyl-D-glutamate + ADP + phosphate + H(+)</text>
        <dbReference type="Rhea" id="RHEA:16429"/>
        <dbReference type="ChEBI" id="CHEBI:15378"/>
        <dbReference type="ChEBI" id="CHEBI:29986"/>
        <dbReference type="ChEBI" id="CHEBI:30616"/>
        <dbReference type="ChEBI" id="CHEBI:43474"/>
        <dbReference type="ChEBI" id="CHEBI:83898"/>
        <dbReference type="ChEBI" id="CHEBI:83900"/>
        <dbReference type="ChEBI" id="CHEBI:456216"/>
        <dbReference type="EC" id="6.3.2.9"/>
    </reaction>
</comment>
<comment type="pathway">
    <text evidence="1">Cell wall biogenesis; peptidoglycan biosynthesis.</text>
</comment>
<comment type="subcellular location">
    <subcellularLocation>
        <location evidence="1">Cytoplasm</location>
    </subcellularLocation>
</comment>
<comment type="similarity">
    <text evidence="1">Belongs to the MurCDEF family.</text>
</comment>
<keyword id="KW-0067">ATP-binding</keyword>
<keyword id="KW-0131">Cell cycle</keyword>
<keyword id="KW-0132">Cell division</keyword>
<keyword id="KW-0133">Cell shape</keyword>
<keyword id="KW-0961">Cell wall biogenesis/degradation</keyword>
<keyword id="KW-0963">Cytoplasm</keyword>
<keyword id="KW-0436">Ligase</keyword>
<keyword id="KW-0547">Nucleotide-binding</keyword>
<keyword id="KW-0573">Peptidoglycan synthesis</keyword>
<keyword id="KW-1185">Reference proteome</keyword>
<proteinExistence type="inferred from homology"/>